<organism>
    <name type="scientific">Eremothecium gossypii (strain ATCC 10895 / CBS 109.51 / FGSC 9923 / NRRL Y-1056)</name>
    <name type="common">Yeast</name>
    <name type="synonym">Ashbya gossypii</name>
    <dbReference type="NCBI Taxonomy" id="284811"/>
    <lineage>
        <taxon>Eukaryota</taxon>
        <taxon>Fungi</taxon>
        <taxon>Dikarya</taxon>
        <taxon>Ascomycota</taxon>
        <taxon>Saccharomycotina</taxon>
        <taxon>Saccharomycetes</taxon>
        <taxon>Saccharomycetales</taxon>
        <taxon>Saccharomycetaceae</taxon>
        <taxon>Eremothecium</taxon>
    </lineage>
</organism>
<name>DBP8_EREGS</name>
<feature type="chain" id="PRO_0000227950" description="ATP-dependent RNA helicase DBP8">
    <location>
        <begin position="1"/>
        <end position="435"/>
    </location>
</feature>
<feature type="domain" description="Helicase ATP-binding" evidence="2">
    <location>
        <begin position="37"/>
        <end position="213"/>
    </location>
</feature>
<feature type="domain" description="Helicase C-terminal" evidence="3">
    <location>
        <begin position="246"/>
        <end position="393"/>
    </location>
</feature>
<feature type="region of interest" description="Disordered" evidence="4">
    <location>
        <begin position="411"/>
        <end position="435"/>
    </location>
</feature>
<feature type="short sequence motif" description="Q motif">
    <location>
        <begin position="6"/>
        <end position="34"/>
    </location>
</feature>
<feature type="short sequence motif" description="DEAD box">
    <location>
        <begin position="159"/>
        <end position="162"/>
    </location>
</feature>
<feature type="compositionally biased region" description="Basic and acidic residues" evidence="4">
    <location>
        <begin position="411"/>
        <end position="420"/>
    </location>
</feature>
<feature type="compositionally biased region" description="Basic residues" evidence="4">
    <location>
        <begin position="421"/>
        <end position="435"/>
    </location>
</feature>
<feature type="binding site" evidence="2">
    <location>
        <begin position="50"/>
        <end position="57"/>
    </location>
    <ligand>
        <name>ATP</name>
        <dbReference type="ChEBI" id="CHEBI:30616"/>
    </ligand>
</feature>
<accession>Q756G5</accession>
<reference key="1">
    <citation type="journal article" date="2004" name="Science">
        <title>The Ashbya gossypii genome as a tool for mapping the ancient Saccharomyces cerevisiae genome.</title>
        <authorList>
            <person name="Dietrich F.S."/>
            <person name="Voegeli S."/>
            <person name="Brachat S."/>
            <person name="Lerch A."/>
            <person name="Gates K."/>
            <person name="Steiner S."/>
            <person name="Mohr C."/>
            <person name="Poehlmann R."/>
            <person name="Luedi P."/>
            <person name="Choi S."/>
            <person name="Wing R.A."/>
            <person name="Flavier A."/>
            <person name="Gaffney T.D."/>
            <person name="Philippsen P."/>
        </authorList>
    </citation>
    <scope>NUCLEOTIDE SEQUENCE [LARGE SCALE GENOMIC DNA]</scope>
    <source>
        <strain>ATCC 10895 / CBS 109.51 / FGSC 9923 / NRRL Y-1056</strain>
    </source>
</reference>
<reference key="2">
    <citation type="journal article" date="2013" name="G3 (Bethesda)">
        <title>Genomes of Ashbya fungi isolated from insects reveal four mating-type loci, numerous translocations, lack of transposons, and distinct gene duplications.</title>
        <authorList>
            <person name="Dietrich F.S."/>
            <person name="Voegeli S."/>
            <person name="Kuo S."/>
            <person name="Philippsen P."/>
        </authorList>
    </citation>
    <scope>GENOME REANNOTATION</scope>
    <source>
        <strain>ATCC 10895 / CBS 109.51 / FGSC 9923 / NRRL Y-1056</strain>
    </source>
</reference>
<protein>
    <recommendedName>
        <fullName>ATP-dependent RNA helicase DBP8</fullName>
        <ecNumber>3.6.4.13</ecNumber>
    </recommendedName>
</protein>
<proteinExistence type="inferred from homology"/>
<comment type="function">
    <text evidence="1">ATP-binding RNA helicase involved in 40S ribosomal subunit biogenesis and is required for the normal formation of 18S rRNAs through pre-rRNA processing at A0, A1 and A2 sites. Required for vegetative growth (By similarity).</text>
</comment>
<comment type="catalytic activity">
    <reaction>
        <text>ATP + H2O = ADP + phosphate + H(+)</text>
        <dbReference type="Rhea" id="RHEA:13065"/>
        <dbReference type="ChEBI" id="CHEBI:15377"/>
        <dbReference type="ChEBI" id="CHEBI:15378"/>
        <dbReference type="ChEBI" id="CHEBI:30616"/>
        <dbReference type="ChEBI" id="CHEBI:43474"/>
        <dbReference type="ChEBI" id="CHEBI:456216"/>
        <dbReference type="EC" id="3.6.4.13"/>
    </reaction>
</comment>
<comment type="subcellular location">
    <subcellularLocation>
        <location evidence="1">Nucleus</location>
        <location evidence="1">Nucleolus</location>
    </subcellularLocation>
</comment>
<comment type="domain">
    <text>The Q motif is unique to and characteristic of the DEAD box family of RNA helicases and controls ATP binding and hydrolysis.</text>
</comment>
<comment type="similarity">
    <text evidence="5">Belongs to the DEAD box helicase family. DDX49/DBP8 subfamily.</text>
</comment>
<keyword id="KW-0067">ATP-binding</keyword>
<keyword id="KW-0347">Helicase</keyword>
<keyword id="KW-0378">Hydrolase</keyword>
<keyword id="KW-0547">Nucleotide-binding</keyword>
<keyword id="KW-0539">Nucleus</keyword>
<keyword id="KW-1185">Reference proteome</keyword>
<keyword id="KW-0690">Ribosome biogenesis</keyword>
<keyword id="KW-0694">RNA-binding</keyword>
<keyword id="KW-0698">rRNA processing</keyword>
<gene>
    <name type="primary">DBP8</name>
    <name type="ordered locus">AER301C</name>
</gene>
<dbReference type="EC" id="3.6.4.13"/>
<dbReference type="EMBL" id="AE016818">
    <property type="protein sequence ID" value="AAS52982.1"/>
    <property type="molecule type" value="Genomic_DNA"/>
</dbReference>
<dbReference type="RefSeq" id="NP_985158.1">
    <property type="nucleotide sequence ID" value="NM_210512.1"/>
</dbReference>
<dbReference type="SMR" id="Q756G5"/>
<dbReference type="FunCoup" id="Q756G5">
    <property type="interactions" value="922"/>
</dbReference>
<dbReference type="STRING" id="284811.Q756G5"/>
<dbReference type="EnsemblFungi" id="AAS52982">
    <property type="protein sequence ID" value="AAS52982"/>
    <property type="gene ID" value="AGOS_AER301C"/>
</dbReference>
<dbReference type="GeneID" id="4621371"/>
<dbReference type="KEGG" id="ago:AGOS_AER301C"/>
<dbReference type="eggNOG" id="KOG0340">
    <property type="taxonomic scope" value="Eukaryota"/>
</dbReference>
<dbReference type="HOGENOM" id="CLU_003041_1_1_1"/>
<dbReference type="InParanoid" id="Q756G5"/>
<dbReference type="OMA" id="GMPYPKQ"/>
<dbReference type="OrthoDB" id="10261904at2759"/>
<dbReference type="Proteomes" id="UP000000591">
    <property type="component" value="Chromosome V"/>
</dbReference>
<dbReference type="GO" id="GO:0005730">
    <property type="term" value="C:nucleolus"/>
    <property type="evidence" value="ECO:0007669"/>
    <property type="project" value="UniProtKB-SubCell"/>
</dbReference>
<dbReference type="GO" id="GO:0005634">
    <property type="term" value="C:nucleus"/>
    <property type="evidence" value="ECO:0000318"/>
    <property type="project" value="GO_Central"/>
</dbReference>
<dbReference type="GO" id="GO:0032040">
    <property type="term" value="C:small-subunit processome"/>
    <property type="evidence" value="ECO:0007669"/>
    <property type="project" value="EnsemblFungi"/>
</dbReference>
<dbReference type="GO" id="GO:0005524">
    <property type="term" value="F:ATP binding"/>
    <property type="evidence" value="ECO:0007669"/>
    <property type="project" value="UniProtKB-KW"/>
</dbReference>
<dbReference type="GO" id="GO:0016887">
    <property type="term" value="F:ATP hydrolysis activity"/>
    <property type="evidence" value="ECO:0007669"/>
    <property type="project" value="EnsemblFungi"/>
</dbReference>
<dbReference type="GO" id="GO:0003723">
    <property type="term" value="F:RNA binding"/>
    <property type="evidence" value="ECO:0007669"/>
    <property type="project" value="UniProtKB-KW"/>
</dbReference>
<dbReference type="GO" id="GO:0003724">
    <property type="term" value="F:RNA helicase activity"/>
    <property type="evidence" value="ECO:0007669"/>
    <property type="project" value="UniProtKB-EC"/>
</dbReference>
<dbReference type="GO" id="GO:0000480">
    <property type="term" value="P:endonucleolytic cleavage in 5'-ETS of tricistronic rRNA transcript (SSU-rRNA, 5.8S rRNA, LSU-rRNA)"/>
    <property type="evidence" value="ECO:0007669"/>
    <property type="project" value="EnsemblFungi"/>
</dbReference>
<dbReference type="GO" id="GO:0000447">
    <property type="term" value="P:endonucleolytic cleavage in ITS1 to separate SSU-rRNA from 5.8S rRNA and LSU-rRNA from tricistronic rRNA transcript (SSU-rRNA, 5.8S rRNA, LSU-rRNA)"/>
    <property type="evidence" value="ECO:0007669"/>
    <property type="project" value="EnsemblFungi"/>
</dbReference>
<dbReference type="GO" id="GO:0000472">
    <property type="term" value="P:endonucleolytic cleavage to generate mature 5'-end of SSU-rRNA from (SSU-rRNA, 5.8S rRNA, LSU-rRNA)"/>
    <property type="evidence" value="ECO:0007669"/>
    <property type="project" value="EnsemblFungi"/>
</dbReference>
<dbReference type="GO" id="GO:0006364">
    <property type="term" value="P:rRNA processing"/>
    <property type="evidence" value="ECO:0000318"/>
    <property type="project" value="GO_Central"/>
</dbReference>
<dbReference type="CDD" id="cd17955">
    <property type="entry name" value="DEADc_DDX49"/>
    <property type="match status" value="1"/>
</dbReference>
<dbReference type="CDD" id="cd18787">
    <property type="entry name" value="SF2_C_DEAD"/>
    <property type="match status" value="1"/>
</dbReference>
<dbReference type="Gene3D" id="3.40.50.300">
    <property type="entry name" value="P-loop containing nucleotide triphosphate hydrolases"/>
    <property type="match status" value="2"/>
</dbReference>
<dbReference type="InterPro" id="IPR011545">
    <property type="entry name" value="DEAD/DEAH_box_helicase_dom"/>
</dbReference>
<dbReference type="InterPro" id="IPR050079">
    <property type="entry name" value="DEAD_box_RNA_helicase"/>
</dbReference>
<dbReference type="InterPro" id="IPR014001">
    <property type="entry name" value="Helicase_ATP-bd"/>
</dbReference>
<dbReference type="InterPro" id="IPR001650">
    <property type="entry name" value="Helicase_C-like"/>
</dbReference>
<dbReference type="InterPro" id="IPR027417">
    <property type="entry name" value="P-loop_NTPase"/>
</dbReference>
<dbReference type="InterPro" id="IPR014014">
    <property type="entry name" value="RNA_helicase_DEAD_Q_motif"/>
</dbReference>
<dbReference type="PANTHER" id="PTHR47959:SF24">
    <property type="entry name" value="ATP-DEPENDENT RNA HELICASE"/>
    <property type="match status" value="1"/>
</dbReference>
<dbReference type="PANTHER" id="PTHR47959">
    <property type="entry name" value="ATP-DEPENDENT RNA HELICASE RHLE-RELATED"/>
    <property type="match status" value="1"/>
</dbReference>
<dbReference type="Pfam" id="PF00270">
    <property type="entry name" value="DEAD"/>
    <property type="match status" value="1"/>
</dbReference>
<dbReference type="Pfam" id="PF00271">
    <property type="entry name" value="Helicase_C"/>
    <property type="match status" value="1"/>
</dbReference>
<dbReference type="SMART" id="SM00487">
    <property type="entry name" value="DEXDc"/>
    <property type="match status" value="1"/>
</dbReference>
<dbReference type="SMART" id="SM00490">
    <property type="entry name" value="HELICc"/>
    <property type="match status" value="1"/>
</dbReference>
<dbReference type="SUPFAM" id="SSF52540">
    <property type="entry name" value="P-loop containing nucleoside triphosphate hydrolases"/>
    <property type="match status" value="1"/>
</dbReference>
<dbReference type="PROSITE" id="PS51192">
    <property type="entry name" value="HELICASE_ATP_BIND_1"/>
    <property type="match status" value="1"/>
</dbReference>
<dbReference type="PROSITE" id="PS51194">
    <property type="entry name" value="HELICASE_CTER"/>
    <property type="match status" value="1"/>
</dbReference>
<dbReference type="PROSITE" id="PS51195">
    <property type="entry name" value="Q_MOTIF"/>
    <property type="match status" value="1"/>
</dbReference>
<evidence type="ECO:0000250" key="1"/>
<evidence type="ECO:0000255" key="2">
    <source>
        <dbReference type="PROSITE-ProRule" id="PRU00541"/>
    </source>
</evidence>
<evidence type="ECO:0000255" key="3">
    <source>
        <dbReference type="PROSITE-ProRule" id="PRU00542"/>
    </source>
</evidence>
<evidence type="ECO:0000256" key="4">
    <source>
        <dbReference type="SAM" id="MobiDB-lite"/>
    </source>
</evidence>
<evidence type="ECO:0000305" key="5"/>
<sequence>MSDSNSTFKDLGVAKWLAEALNSMKITQPTTIQKACIPEILAGRDCIGGAKTGSGKTIAFAAPMLTKWSADPCGMFGIVLTPTRELAMQIAEQFTALGSVMNIRVALVVGGEDIVSQALELQRKPHFIIATPGRLAHHIMHSGEDTIGGLKRVRYLVLDEADILLTDTFSDALATCVQILPPKEKRQNLLFTATMTDQVLALKDAPPTSGKPPLFSFHVENLDDLAVPASLQTTYLLVPEHVKEAYLYQVLSSEEYKSKSAIVFVNRTISAEILRRMLMQLEIRVTSLHSQMPQRERTNSLQRFRANAARVLIATDVASRGLDIPAVQLVVNYDIPANPDTYIHRAGRTARAGRGGEALSFIAPKDVSRIQAIEERIGKKMDEFTKVGDTALIRKSLNKVTVAKRESLMAMDKEGFGERRKTQRSKGKQTKSLHS</sequence>